<feature type="chain" id="PRO_0000405291" description="1,3-beta-galactosyl-N-acetylhexosamine phosphorylase Cphy0577">
    <location>
        <begin position="1"/>
        <end position="723"/>
    </location>
</feature>
<feature type="active site" description="Proton donor" evidence="1">
    <location>
        <position position="317"/>
    </location>
</feature>
<organism>
    <name type="scientific">Lachnoclostridium phytofermentans (strain ATCC 700394 / DSM 18823 / ISDg)</name>
    <name type="common">Clostridium phytofermentans</name>
    <dbReference type="NCBI Taxonomy" id="357809"/>
    <lineage>
        <taxon>Bacteria</taxon>
        <taxon>Bacillati</taxon>
        <taxon>Bacillota</taxon>
        <taxon>Clostridia</taxon>
        <taxon>Lachnospirales</taxon>
        <taxon>Lachnospiraceae</taxon>
    </lineage>
</organism>
<comment type="function">
    <text evidence="2">Reversibly phosphorolyzes beta-D-galactopyranosyl-(1-&gt;3)-N-acetyl-D-glucosamine to form alpha-D-galactopyranose 1-phosphate and acetyl-D-glucosamine. Active towards galacto-N-biose and lacto-N-biose. Does not phosphorolyze galacto-N-tetraose or lacto-N-tetraose. In the reverse reaction has activity toward N-acetyl-D-glucosamine and N-acetyl-D-galactosamine, but not L-rhamnose, D-glucose or D-galactose.</text>
</comment>
<comment type="catalytic activity">
    <reaction evidence="2">
        <text>beta-D-galactosyl-(1-&gt;3)-N-acetyl-D-glucosamine + phosphate = alpha-D-galactose 1-phosphate + N-acetyl-D-glucosamine</text>
        <dbReference type="Rhea" id="RHEA:20285"/>
        <dbReference type="ChEBI" id="CHEBI:27707"/>
        <dbReference type="ChEBI" id="CHEBI:43474"/>
        <dbReference type="ChEBI" id="CHEBI:58336"/>
        <dbReference type="ChEBI" id="CHEBI:506227"/>
        <dbReference type="EC" id="2.4.1.211"/>
    </reaction>
</comment>
<comment type="biophysicochemical properties">
    <kinetics>
        <KM evidence="2">4.5 mM for lacto-N-biose</KM>
        <KM evidence="2">8 mM for galacto-N-biose</KM>
        <KM evidence="2">3.4 mM for N-acetyl-D-glucosamine</KM>
        <KM evidence="2">3.3 mM for N-acetyl-D-galactosamine</KM>
    </kinetics>
</comment>
<comment type="similarity">
    <text evidence="3">Belongs to the glycoside hydrolase 112 family.</text>
</comment>
<name>GAHP2_LACP7</name>
<reference evidence="4" key="1">
    <citation type="submission" date="2007-11" db="EMBL/GenBank/DDBJ databases">
        <title>Complete genome sequence of Clostridium phytofermentans ISDg.</title>
        <authorList>
            <person name="Leschine S.B."/>
            <person name="Warnick T.A."/>
            <person name="Blanchard J.L."/>
            <person name="Schnell D.J."/>
            <person name="Petit E.L."/>
            <person name="LaTouf W.G."/>
            <person name="Copeland A."/>
            <person name="Lucas S."/>
            <person name="Lapidus A."/>
            <person name="Barry K."/>
            <person name="Glavina del Rio T."/>
            <person name="Dalin E."/>
            <person name="Tice H."/>
            <person name="Pitluck S."/>
            <person name="Kiss H."/>
            <person name="Brettin T."/>
            <person name="Bruce D."/>
            <person name="Detter J.C."/>
            <person name="Han C."/>
            <person name="Kuske C."/>
            <person name="Schmutz J."/>
            <person name="Larimer F."/>
            <person name="Land M."/>
            <person name="Hauser L."/>
            <person name="Kyrpides N."/>
            <person name="Kim E.A."/>
            <person name="Richardson P."/>
        </authorList>
    </citation>
    <scope>NUCLEOTIDE SEQUENCE [LARGE SCALE GENOMIC DNA]</scope>
    <source>
        <strain>ATCC 700394 / DSM 18823 / ISDg</strain>
    </source>
</reference>
<reference evidence="3" key="2">
    <citation type="journal article" date="2009" name="J. Biol. Chem.">
        <title>Characterization of three beta-galactoside phosphorylases from Clostridium phytofermentans: discovery of d-galactosyl-beta1-&gt;4-l-rhamnose phosphorylase.</title>
        <authorList>
            <person name="Nakajima M."/>
            <person name="Nishimoto M."/>
            <person name="Kitaoka M."/>
        </authorList>
    </citation>
    <scope>FUNCTION</scope>
    <scope>CATALYTIC ACTIVITY</scope>
    <scope>BIOPHYSICOCHEMICAL PROPERTIES</scope>
</reference>
<gene>
    <name type="ordered locus">Cphy_0577</name>
</gene>
<accession>A9KIW5</accession>
<protein>
    <recommendedName>
        <fullName>1,3-beta-galactosyl-N-acetylhexosamine phosphorylase Cphy0577</fullName>
        <ecNumber>2.4.1.211</ecNumber>
    </recommendedName>
    <alternativeName>
        <fullName>D-galactosyl-1,4-L-rhamnose phosphorylase</fullName>
    </alternativeName>
</protein>
<sequence>MKKDTMLAGRVTIPTDVDVVPETMELLNRWGADAIRDCDGTDYPEELKAVQAKVYSTYYTTRKDNAWAKAHPEEVQQCYIMTSFYTATETTLRIPLLKGIAKELMMVNNYDDKVRWWEVIDRSTAMVVSTDTWSYDKETGEVIITNCEPFHNYTVSFLAYLIWDPVHMYNAVVNGWQGVEHQITFDVRQPKTREYSMVRLRKFIEEHPYVDVIRYTTFFHQFTLVFDEMMREKYVDWYGYSASVSPYILEQFEKEVGYRFRPEFIIDQGYYNNQYRIPSKEFKDFQAFQRREVAKLAKEMVDITHEYGKEAMMFLGDHWIGTEPFMEEFKTIGLDAVVGSVGNGSTLRLISDIPGVKYTEGRFLPYFFPDTFHEGGDPVKEAKVNWVTARRAILRKPIDRIGYGGYLKLACQFPEFIDYVESVCNEFRELYENIKGTTPFCIKRVAVLNSWGKMRAWGAHMVHHALYQKQNYSYAGVIESLSGTPFEVSFISFDDIKKDKNILKNIDVIINVGDGDTAHTGGLVWEDADISSAIHQFVYEGGGLIGIGEPTGHQYQGRYIQLANVFGIEKETGFTLNYDKYNWDAVESHFITEDCTKEVDFGEGKKNMYALEGTTILVQMEKEVQMAVNEFGKGRSVYLSGLPYSFENSRVLYRSILWSAHEEENLHKWYSSNFNVEVHAYVKNNKYCVVNNTYEPQNTTIYRGDSSSFDLELEANEIIWYEI</sequence>
<evidence type="ECO:0000250" key="1"/>
<evidence type="ECO:0000269" key="2">
    <source>
    </source>
</evidence>
<evidence type="ECO:0000305" key="3"/>
<evidence type="ECO:0000312" key="4">
    <source>
        <dbReference type="EMBL" id="ABX40964.1"/>
    </source>
</evidence>
<keyword id="KW-0119">Carbohydrate metabolism</keyword>
<keyword id="KW-0328">Glycosyltransferase</keyword>
<keyword id="KW-1185">Reference proteome</keyword>
<keyword id="KW-0808">Transferase</keyword>
<proteinExistence type="evidence at protein level"/>
<dbReference type="EC" id="2.4.1.211"/>
<dbReference type="EMBL" id="CP000885">
    <property type="protein sequence ID" value="ABX40964.1"/>
    <property type="molecule type" value="Genomic_DNA"/>
</dbReference>
<dbReference type="RefSeq" id="WP_012198608.1">
    <property type="nucleotide sequence ID" value="NC_010001.1"/>
</dbReference>
<dbReference type="SMR" id="A9KIW5"/>
<dbReference type="STRING" id="357809.Cphy_0577"/>
<dbReference type="CAZy" id="GH112">
    <property type="family name" value="Glycoside Hydrolase Family 112"/>
</dbReference>
<dbReference type="KEGG" id="cpy:Cphy_0577"/>
<dbReference type="eggNOG" id="COG5426">
    <property type="taxonomic scope" value="Bacteria"/>
</dbReference>
<dbReference type="HOGENOM" id="CLU_022367_0_0_9"/>
<dbReference type="OrthoDB" id="5834503at2"/>
<dbReference type="BRENDA" id="2.4.1.211">
    <property type="organism ID" value="10424"/>
</dbReference>
<dbReference type="Proteomes" id="UP000000370">
    <property type="component" value="Chromosome"/>
</dbReference>
<dbReference type="GO" id="GO:0050500">
    <property type="term" value="F:1,3-beta-galactosyl-N-acetylhexosamine phosphorylase activity"/>
    <property type="evidence" value="ECO:0000314"/>
    <property type="project" value="UniProtKB"/>
</dbReference>
<dbReference type="GO" id="GO:0004645">
    <property type="term" value="F:1,4-alpha-oligoglucan phosphorylase activity"/>
    <property type="evidence" value="ECO:0007669"/>
    <property type="project" value="InterPro"/>
</dbReference>
<dbReference type="GO" id="GO:0005975">
    <property type="term" value="P:carbohydrate metabolic process"/>
    <property type="evidence" value="ECO:0000314"/>
    <property type="project" value="UniProtKB"/>
</dbReference>
<dbReference type="FunFam" id="2.60.40.1180:FF:000101">
    <property type="entry name" value="1,3-beta-galactosyl-N-acetylhexosamine phosphorylase"/>
    <property type="match status" value="1"/>
</dbReference>
<dbReference type="Gene3D" id="3.40.50.880">
    <property type="match status" value="1"/>
</dbReference>
<dbReference type="Gene3D" id="3.20.20.80">
    <property type="entry name" value="Glycosidases"/>
    <property type="match status" value="1"/>
</dbReference>
<dbReference type="Gene3D" id="2.60.40.1180">
    <property type="entry name" value="Golgi alpha-mannosidase II"/>
    <property type="match status" value="1"/>
</dbReference>
<dbReference type="Gene3D" id="2.60.40.10">
    <property type="entry name" value="Immunoglobulins"/>
    <property type="match status" value="1"/>
</dbReference>
<dbReference type="InterPro" id="IPR029062">
    <property type="entry name" value="Class_I_gatase-like"/>
</dbReference>
<dbReference type="InterPro" id="IPR013780">
    <property type="entry name" value="Glyco_hydro_b"/>
</dbReference>
<dbReference type="InterPro" id="IPR013783">
    <property type="entry name" value="Ig-like_fold"/>
</dbReference>
<dbReference type="InterPro" id="IPR035080">
    <property type="entry name" value="Lact_bio_phlase-like_N"/>
</dbReference>
<dbReference type="InterPro" id="IPR012711">
    <property type="entry name" value="Lacto-N-biose_phosphorylase"/>
</dbReference>
<dbReference type="InterPro" id="IPR035356">
    <property type="entry name" value="LBP_C"/>
</dbReference>
<dbReference type="InterPro" id="IPR035363">
    <property type="entry name" value="LBP_M"/>
</dbReference>
<dbReference type="NCBIfam" id="TIGR02336">
    <property type="entry name" value="1,3-beta-galactosyl-N-acetylhexosamine phosphorylase"/>
    <property type="match status" value="1"/>
</dbReference>
<dbReference type="Pfam" id="PF09508">
    <property type="entry name" value="Lact_bio_phlase"/>
    <property type="match status" value="1"/>
</dbReference>
<dbReference type="Pfam" id="PF17386">
    <property type="entry name" value="LBP_C"/>
    <property type="match status" value="1"/>
</dbReference>
<dbReference type="Pfam" id="PF17385">
    <property type="entry name" value="LBP_M"/>
    <property type="match status" value="1"/>
</dbReference>
<dbReference type="SUPFAM" id="SSF52317">
    <property type="entry name" value="Class I glutamine amidotransferase-like"/>
    <property type="match status" value="1"/>
</dbReference>